<name>ACYP_PETMO</name>
<dbReference type="EC" id="3.6.1.7"/>
<dbReference type="EMBL" id="CP000879">
    <property type="protein sequence ID" value="ABX31923.1"/>
    <property type="molecule type" value="Genomic_DNA"/>
</dbReference>
<dbReference type="RefSeq" id="WP_012209023.1">
    <property type="nucleotide sequence ID" value="NC_010003.1"/>
</dbReference>
<dbReference type="SMR" id="A9BHQ1"/>
<dbReference type="STRING" id="403833.Pmob_1206"/>
<dbReference type="KEGG" id="pmo:Pmob_1206"/>
<dbReference type="eggNOG" id="COG1254">
    <property type="taxonomic scope" value="Bacteria"/>
</dbReference>
<dbReference type="HOGENOM" id="CLU_141932_2_1_0"/>
<dbReference type="OrthoDB" id="9808093at2"/>
<dbReference type="Proteomes" id="UP000000789">
    <property type="component" value="Chromosome"/>
</dbReference>
<dbReference type="GO" id="GO:0003998">
    <property type="term" value="F:acylphosphatase activity"/>
    <property type="evidence" value="ECO:0007669"/>
    <property type="project" value="UniProtKB-EC"/>
</dbReference>
<dbReference type="Gene3D" id="3.30.70.100">
    <property type="match status" value="1"/>
</dbReference>
<dbReference type="InterPro" id="IPR020456">
    <property type="entry name" value="Acylphosphatase"/>
</dbReference>
<dbReference type="InterPro" id="IPR001792">
    <property type="entry name" value="Acylphosphatase-like_dom"/>
</dbReference>
<dbReference type="InterPro" id="IPR036046">
    <property type="entry name" value="Acylphosphatase-like_dom_sf"/>
</dbReference>
<dbReference type="InterPro" id="IPR017968">
    <property type="entry name" value="Acylphosphatase_CS"/>
</dbReference>
<dbReference type="PANTHER" id="PTHR47268">
    <property type="entry name" value="ACYLPHOSPHATASE"/>
    <property type="match status" value="1"/>
</dbReference>
<dbReference type="PANTHER" id="PTHR47268:SF4">
    <property type="entry name" value="ACYLPHOSPHATASE"/>
    <property type="match status" value="1"/>
</dbReference>
<dbReference type="Pfam" id="PF00708">
    <property type="entry name" value="Acylphosphatase"/>
    <property type="match status" value="1"/>
</dbReference>
<dbReference type="SUPFAM" id="SSF54975">
    <property type="entry name" value="Acylphosphatase/BLUF domain-like"/>
    <property type="match status" value="1"/>
</dbReference>
<dbReference type="PROSITE" id="PS00151">
    <property type="entry name" value="ACYLPHOSPHATASE_2"/>
    <property type="match status" value="1"/>
</dbReference>
<dbReference type="PROSITE" id="PS51160">
    <property type="entry name" value="ACYLPHOSPHATASE_3"/>
    <property type="match status" value="1"/>
</dbReference>
<gene>
    <name type="primary">acyP</name>
    <name type="ordered locus">Pmob_1206</name>
</gene>
<keyword id="KW-0378">Hydrolase</keyword>
<organism>
    <name type="scientific">Petrotoga mobilis (strain DSM 10674 / SJ95)</name>
    <dbReference type="NCBI Taxonomy" id="403833"/>
    <lineage>
        <taxon>Bacteria</taxon>
        <taxon>Thermotogati</taxon>
        <taxon>Thermotogota</taxon>
        <taxon>Thermotogae</taxon>
        <taxon>Petrotogales</taxon>
        <taxon>Petrotogaceae</taxon>
        <taxon>Petrotoga</taxon>
    </lineage>
</organism>
<reference key="1">
    <citation type="submission" date="2007-11" db="EMBL/GenBank/DDBJ databases">
        <title>Complete sequence of Petroga mobilis SJ95.</title>
        <authorList>
            <consortium name="US DOE Joint Genome Institute"/>
            <person name="Copeland A."/>
            <person name="Lucas S."/>
            <person name="Lapidus A."/>
            <person name="Barry K."/>
            <person name="Glavina del Rio T."/>
            <person name="Dalin E."/>
            <person name="Tice H."/>
            <person name="Pitluck S."/>
            <person name="Meincke L."/>
            <person name="Brettin T."/>
            <person name="Bruce D."/>
            <person name="Detter J.C."/>
            <person name="Han C."/>
            <person name="Kuske C.R."/>
            <person name="Schmutz J."/>
            <person name="Larimer F."/>
            <person name="Land M."/>
            <person name="Hauser L."/>
            <person name="Kyrpides N."/>
            <person name="Mikhailova N."/>
            <person name="Noll K."/>
            <person name="Richardson P."/>
        </authorList>
    </citation>
    <scope>NUCLEOTIDE SEQUENCE [LARGE SCALE GENOMIC DNA]</scope>
    <source>
        <strain>DSM 10674 / SJ95</strain>
    </source>
</reference>
<comment type="catalytic activity">
    <reaction>
        <text>an acyl phosphate + H2O = a carboxylate + phosphate + H(+)</text>
        <dbReference type="Rhea" id="RHEA:14965"/>
        <dbReference type="ChEBI" id="CHEBI:15377"/>
        <dbReference type="ChEBI" id="CHEBI:15378"/>
        <dbReference type="ChEBI" id="CHEBI:29067"/>
        <dbReference type="ChEBI" id="CHEBI:43474"/>
        <dbReference type="ChEBI" id="CHEBI:59918"/>
        <dbReference type="EC" id="3.6.1.7"/>
    </reaction>
</comment>
<comment type="similarity">
    <text evidence="2">Belongs to the acylphosphatase family.</text>
</comment>
<protein>
    <recommendedName>
        <fullName>Acylphosphatase</fullName>
        <ecNumber>3.6.1.7</ecNumber>
    </recommendedName>
    <alternativeName>
        <fullName>Acylphosphate phosphohydrolase</fullName>
    </alternativeName>
</protein>
<sequence length="89" mass="10230">MVCKRWILYGRVQGVGLRHFLRVHGVRLQLEGYVRNLPDGSVEVVAQGEKEKVLKLKTIILQGNGFSRLEDVQEEDFPIGNYGSFHIEY</sequence>
<evidence type="ECO:0000255" key="1">
    <source>
        <dbReference type="PROSITE-ProRule" id="PRU00520"/>
    </source>
</evidence>
<evidence type="ECO:0000305" key="2"/>
<feature type="chain" id="PRO_0000326767" description="Acylphosphatase">
    <location>
        <begin position="1"/>
        <end position="89"/>
    </location>
</feature>
<feature type="domain" description="Acylphosphatase-like" evidence="1">
    <location>
        <begin position="3"/>
        <end position="89"/>
    </location>
</feature>
<feature type="active site" evidence="1">
    <location>
        <position position="18"/>
    </location>
</feature>
<feature type="active site" evidence="1">
    <location>
        <position position="36"/>
    </location>
</feature>
<proteinExistence type="inferred from homology"/>
<accession>A9BHQ1</accession>